<proteinExistence type="inferred from homology"/>
<evidence type="ECO:0000255" key="1">
    <source>
        <dbReference type="HAMAP-Rule" id="MF_00669"/>
    </source>
</evidence>
<keyword id="KW-0749">Sporulation</keyword>
<organism>
    <name type="scientific">Bacillus anthracis (strain CDC 684 / NRRL 3495)</name>
    <dbReference type="NCBI Taxonomy" id="568206"/>
    <lineage>
        <taxon>Bacteria</taxon>
        <taxon>Bacillati</taxon>
        <taxon>Bacillota</taxon>
        <taxon>Bacilli</taxon>
        <taxon>Bacillales</taxon>
        <taxon>Bacillaceae</taxon>
        <taxon>Bacillus</taxon>
        <taxon>Bacillus cereus group</taxon>
    </lineage>
</organism>
<name>SSPI_BACAC</name>
<sequence length="69" mass="7687">MSFNLRGAVLANVSGNTQDQLQETIVDAIQSGEEKMLPGLGVLFEVIWKNADENEKHEMLETLEQGLKK</sequence>
<protein>
    <recommendedName>
        <fullName evidence="1">Small, acid-soluble spore protein I</fullName>
        <shortName evidence="1">SASP I</shortName>
    </recommendedName>
</protein>
<gene>
    <name evidence="1" type="primary">sspI</name>
    <name type="ordered locus">BAMEG_4836</name>
</gene>
<comment type="subcellular location">
    <subcellularLocation>
        <location evidence="1">Spore core</location>
    </subcellularLocation>
</comment>
<comment type="induction">
    <text evidence="1">Expressed only in the forespore compartment of sporulating cells.</text>
</comment>
<comment type="similarity">
    <text evidence="1">Belongs to the SspI family.</text>
</comment>
<feature type="chain" id="PRO_1000147654" description="Small, acid-soluble spore protein I">
    <location>
        <begin position="1"/>
        <end position="69"/>
    </location>
</feature>
<dbReference type="EMBL" id="CP001215">
    <property type="protein sequence ID" value="ACP16212.1"/>
    <property type="molecule type" value="Genomic_DNA"/>
</dbReference>
<dbReference type="RefSeq" id="WP_000009513.1">
    <property type="nucleotide sequence ID" value="NC_012581.1"/>
</dbReference>
<dbReference type="SMR" id="C3L8U0"/>
<dbReference type="GeneID" id="93006545"/>
<dbReference type="KEGG" id="bah:BAMEG_4836"/>
<dbReference type="HOGENOM" id="CLU_188877_0_0_9"/>
<dbReference type="GO" id="GO:0030436">
    <property type="term" value="P:asexual sporulation"/>
    <property type="evidence" value="ECO:0007669"/>
    <property type="project" value="UniProtKB-UniRule"/>
</dbReference>
<dbReference type="GO" id="GO:0030435">
    <property type="term" value="P:sporulation resulting in formation of a cellular spore"/>
    <property type="evidence" value="ECO:0007669"/>
    <property type="project" value="UniProtKB-KW"/>
</dbReference>
<dbReference type="HAMAP" id="MF_00669">
    <property type="entry name" value="SspI"/>
    <property type="match status" value="1"/>
</dbReference>
<dbReference type="InterPro" id="IPR017525">
    <property type="entry name" value="SspI"/>
</dbReference>
<dbReference type="NCBIfam" id="TIGR03092">
    <property type="entry name" value="SASP_sspI"/>
    <property type="match status" value="1"/>
</dbReference>
<dbReference type="Pfam" id="PF14098">
    <property type="entry name" value="SSPI"/>
    <property type="match status" value="1"/>
</dbReference>
<reference key="1">
    <citation type="submission" date="2008-10" db="EMBL/GenBank/DDBJ databases">
        <title>Genome sequence of Bacillus anthracis str. CDC 684.</title>
        <authorList>
            <person name="Dodson R.J."/>
            <person name="Munk A.C."/>
            <person name="Brettin T."/>
            <person name="Bruce D."/>
            <person name="Detter C."/>
            <person name="Tapia R."/>
            <person name="Han C."/>
            <person name="Sutton G."/>
            <person name="Sims D."/>
        </authorList>
    </citation>
    <scope>NUCLEOTIDE SEQUENCE [LARGE SCALE GENOMIC DNA]</scope>
    <source>
        <strain>CDC 684 / NRRL 3495</strain>
    </source>
</reference>
<accession>C3L8U0</accession>